<feature type="chain" id="PRO_0000097884" description="Redox-sensing transcriptional repressor Rex">
    <location>
        <begin position="1"/>
        <end position="211"/>
    </location>
</feature>
<feature type="DNA-binding region" description="H-T-H motif" evidence="1">
    <location>
        <begin position="18"/>
        <end position="57"/>
    </location>
</feature>
<feature type="binding site" evidence="1">
    <location>
        <begin position="92"/>
        <end position="97"/>
    </location>
    <ligand>
        <name>NAD(+)</name>
        <dbReference type="ChEBI" id="CHEBI:57540"/>
    </ligand>
</feature>
<accession>Q9Z9P6</accession>
<comment type="function">
    <text evidence="1">Modulates transcription in response to changes in cellular NADH/NAD(+) redox state.</text>
</comment>
<comment type="subunit">
    <text evidence="1">Homodimer.</text>
</comment>
<comment type="subcellular location">
    <subcellularLocation>
        <location evidence="1">Cytoplasm</location>
    </subcellularLocation>
</comment>
<comment type="similarity">
    <text evidence="1">Belongs to the transcriptional regulatory Rex family.</text>
</comment>
<organism>
    <name type="scientific">Halalkalibacterium halodurans (strain ATCC BAA-125 / DSM 18197 / FERM 7344 / JCM 9153 / C-125)</name>
    <name type="common">Bacillus halodurans</name>
    <dbReference type="NCBI Taxonomy" id="272558"/>
    <lineage>
        <taxon>Bacteria</taxon>
        <taxon>Bacillati</taxon>
        <taxon>Bacillota</taxon>
        <taxon>Bacilli</taxon>
        <taxon>Bacillales</taxon>
        <taxon>Bacillaceae</taxon>
        <taxon>Halalkalibacterium (ex Joshi et al. 2022)</taxon>
    </lineage>
</organism>
<gene>
    <name evidence="1" type="primary">rex</name>
    <name type="ordered locus">BH0551</name>
</gene>
<reference key="1">
    <citation type="journal article" date="1999" name="Extremophiles">
        <title>An improved physical and genetic map of the genome of alkaliphilic Bacillus sp. C-125.</title>
        <authorList>
            <person name="Takami H."/>
            <person name="Nakasone K."/>
            <person name="Hirama C."/>
            <person name="Takaki Y."/>
            <person name="Masui N."/>
            <person name="Fuji F."/>
            <person name="Nakamura Y."/>
            <person name="Inoue A."/>
        </authorList>
    </citation>
    <scope>NUCLEOTIDE SEQUENCE [GENOMIC DNA]</scope>
    <source>
        <strain>ATCC BAA-125 / DSM 18197 / FERM 7344 / JCM 9153 / C-125</strain>
    </source>
</reference>
<reference key="2">
    <citation type="journal article" date="2000" name="Nucleic Acids Res.">
        <title>Complete genome sequence of the alkaliphilic bacterium Bacillus halodurans and genomic sequence comparison with Bacillus subtilis.</title>
        <authorList>
            <person name="Takami H."/>
            <person name="Nakasone K."/>
            <person name="Takaki Y."/>
            <person name="Maeno G."/>
            <person name="Sasaki R."/>
            <person name="Masui N."/>
            <person name="Fuji F."/>
            <person name="Hirama C."/>
            <person name="Nakamura Y."/>
            <person name="Ogasawara N."/>
            <person name="Kuhara S."/>
            <person name="Horikoshi K."/>
        </authorList>
    </citation>
    <scope>NUCLEOTIDE SEQUENCE [LARGE SCALE GENOMIC DNA]</scope>
    <source>
        <strain>ATCC BAA-125 / DSM 18197 / FERM 7344 / JCM 9153 / C-125</strain>
    </source>
</reference>
<name>REX_HALH5</name>
<sequence length="211" mass="23559">MNNEPTKIPQATAKRLPLYYRFLENLHASGKQRVSSSELSEAVKVDSATIRRDFSYFGALGKKGYGYNVNYLLTFFRKTLHQDELTKVMLIGVGNLGTALLNYNFSKNNHTQIVMAFDVDREKIGNTVSGVKIENLDNLENKITSDVSVAILTVPAAVAQKTADRLVNAGVKGILNFTPARIAVPEHVRVHHIDLSVELQALIYFLKHYPL</sequence>
<dbReference type="EMBL" id="AB013375">
    <property type="protein sequence ID" value="BAA75386.1"/>
    <property type="molecule type" value="Genomic_DNA"/>
</dbReference>
<dbReference type="EMBL" id="BA000004">
    <property type="protein sequence ID" value="BAB04270.1"/>
    <property type="molecule type" value="Genomic_DNA"/>
</dbReference>
<dbReference type="PIR" id="G83718">
    <property type="entry name" value="G83718"/>
</dbReference>
<dbReference type="RefSeq" id="WP_010896728.1">
    <property type="nucleotide sequence ID" value="NC_002570.2"/>
</dbReference>
<dbReference type="SMR" id="Q9Z9P6"/>
<dbReference type="STRING" id="272558.gene:10726420"/>
<dbReference type="GeneID" id="87596123"/>
<dbReference type="KEGG" id="bha:BH0551"/>
<dbReference type="eggNOG" id="COG2344">
    <property type="taxonomic scope" value="Bacteria"/>
</dbReference>
<dbReference type="HOGENOM" id="CLU_061534_1_1_9"/>
<dbReference type="OrthoDB" id="9784760at2"/>
<dbReference type="Proteomes" id="UP000001258">
    <property type="component" value="Chromosome"/>
</dbReference>
<dbReference type="GO" id="GO:0005737">
    <property type="term" value="C:cytoplasm"/>
    <property type="evidence" value="ECO:0007669"/>
    <property type="project" value="UniProtKB-SubCell"/>
</dbReference>
<dbReference type="GO" id="GO:0003677">
    <property type="term" value="F:DNA binding"/>
    <property type="evidence" value="ECO:0007669"/>
    <property type="project" value="UniProtKB-UniRule"/>
</dbReference>
<dbReference type="GO" id="GO:0003700">
    <property type="term" value="F:DNA-binding transcription factor activity"/>
    <property type="evidence" value="ECO:0007669"/>
    <property type="project" value="UniProtKB-UniRule"/>
</dbReference>
<dbReference type="GO" id="GO:0045892">
    <property type="term" value="P:negative regulation of DNA-templated transcription"/>
    <property type="evidence" value="ECO:0007669"/>
    <property type="project" value="InterPro"/>
</dbReference>
<dbReference type="GO" id="GO:0051775">
    <property type="term" value="P:response to redox state"/>
    <property type="evidence" value="ECO:0007669"/>
    <property type="project" value="InterPro"/>
</dbReference>
<dbReference type="Gene3D" id="3.40.50.720">
    <property type="entry name" value="NAD(P)-binding Rossmann-like Domain"/>
    <property type="match status" value="1"/>
</dbReference>
<dbReference type="Gene3D" id="1.10.10.10">
    <property type="entry name" value="Winged helix-like DNA-binding domain superfamily/Winged helix DNA-binding domain"/>
    <property type="match status" value="1"/>
</dbReference>
<dbReference type="HAMAP" id="MF_01131">
    <property type="entry name" value="Rex"/>
    <property type="match status" value="1"/>
</dbReference>
<dbReference type="InterPro" id="IPR003781">
    <property type="entry name" value="CoA-bd"/>
</dbReference>
<dbReference type="InterPro" id="IPR036291">
    <property type="entry name" value="NAD(P)-bd_dom_sf"/>
</dbReference>
<dbReference type="InterPro" id="IPR009718">
    <property type="entry name" value="Rex_DNA-bd_C_dom"/>
</dbReference>
<dbReference type="InterPro" id="IPR022876">
    <property type="entry name" value="Tscrpt_rep_Rex"/>
</dbReference>
<dbReference type="InterPro" id="IPR036388">
    <property type="entry name" value="WH-like_DNA-bd_sf"/>
</dbReference>
<dbReference type="InterPro" id="IPR036390">
    <property type="entry name" value="WH_DNA-bd_sf"/>
</dbReference>
<dbReference type="NCBIfam" id="NF003989">
    <property type="entry name" value="PRK05472.1-3"/>
    <property type="match status" value="1"/>
</dbReference>
<dbReference type="NCBIfam" id="NF003991">
    <property type="entry name" value="PRK05472.1-5"/>
    <property type="match status" value="1"/>
</dbReference>
<dbReference type="NCBIfam" id="NF003994">
    <property type="entry name" value="PRK05472.2-3"/>
    <property type="match status" value="1"/>
</dbReference>
<dbReference type="NCBIfam" id="NF003995">
    <property type="entry name" value="PRK05472.2-4"/>
    <property type="match status" value="1"/>
</dbReference>
<dbReference type="NCBIfam" id="NF003996">
    <property type="entry name" value="PRK05472.2-5"/>
    <property type="match status" value="1"/>
</dbReference>
<dbReference type="PANTHER" id="PTHR35786">
    <property type="entry name" value="REDOX-SENSING TRANSCRIPTIONAL REPRESSOR REX"/>
    <property type="match status" value="1"/>
</dbReference>
<dbReference type="PANTHER" id="PTHR35786:SF1">
    <property type="entry name" value="REDOX-SENSING TRANSCRIPTIONAL REPRESSOR REX 1"/>
    <property type="match status" value="1"/>
</dbReference>
<dbReference type="Pfam" id="PF02629">
    <property type="entry name" value="CoA_binding"/>
    <property type="match status" value="1"/>
</dbReference>
<dbReference type="Pfam" id="PF06971">
    <property type="entry name" value="Put_DNA-bind_N"/>
    <property type="match status" value="1"/>
</dbReference>
<dbReference type="SMART" id="SM00881">
    <property type="entry name" value="CoA_binding"/>
    <property type="match status" value="1"/>
</dbReference>
<dbReference type="SUPFAM" id="SSF51735">
    <property type="entry name" value="NAD(P)-binding Rossmann-fold domains"/>
    <property type="match status" value="1"/>
</dbReference>
<dbReference type="SUPFAM" id="SSF46785">
    <property type="entry name" value="Winged helix' DNA-binding domain"/>
    <property type="match status" value="1"/>
</dbReference>
<keyword id="KW-0963">Cytoplasm</keyword>
<keyword id="KW-0238">DNA-binding</keyword>
<keyword id="KW-0520">NAD</keyword>
<keyword id="KW-1185">Reference proteome</keyword>
<keyword id="KW-0678">Repressor</keyword>
<keyword id="KW-0804">Transcription</keyword>
<keyword id="KW-0805">Transcription regulation</keyword>
<evidence type="ECO:0000255" key="1">
    <source>
        <dbReference type="HAMAP-Rule" id="MF_01131"/>
    </source>
</evidence>
<protein>
    <recommendedName>
        <fullName evidence="1">Redox-sensing transcriptional repressor Rex</fullName>
    </recommendedName>
</protein>
<proteinExistence type="inferred from homology"/>